<sequence>MIDKRDDKPFKLKSKYKPSGDQPQAIESLVDNIEGGEKAQILLGATGTGKTYTMSQVISKVNKPTLVIAHNKTLAGQLYGEFKEFFPDNAVEYFVSYYDYYQPEAYVPSSDTYIEKDSSVNDEIDKLRHSATSSLLERNDVIVVASVSCIYGLGSPKEYADSAVSLRPGQEISRDTLLNQLVDIQFERNDIDFQRGCFRVRGDVVEVFPASRDEHAFRVEFFGDEIDRICEIESLTGKTIGEVDHLVLFPATHFVTNDEHMEQSIAKIQAELAEQLQLFESEGKLLEAQRLRQRTEYDIEMLREMGYTSGVENYSRHMDGRSPGEPPYTLLDFFPEDFLIMIDESHMTMGQIKGMYNGDQARKQMLVDYGFRLPSALDNRPLRREEFESHVHQIVYVSATPGEYEMSQTNTIIEQIIRPTGLLDPEIDVRPSMGQIDDLLGEINQRVARDERTFITTLTKKMAEDLTDYLKEMGVKVKYMHSDIKTLERTEIIRDLRLGVFDVLIGINLLREGIDVPEVSLVAILDADKEGFLRNERGLIQTIGRAARNVDGHVIMYADKMTDSMQRAIDETARRREIQIAYNKAHGIVPQTIKKDIRGLISISKTSHNDISKEEMDYESMSRGERKEAINALQKQMQEAAELLDFELAAQMRDLILELKLMD</sequence>
<evidence type="ECO:0000255" key="1">
    <source>
        <dbReference type="HAMAP-Rule" id="MF_00204"/>
    </source>
</evidence>
<evidence type="ECO:0000256" key="2">
    <source>
        <dbReference type="SAM" id="MobiDB-lite"/>
    </source>
</evidence>
<keyword id="KW-0067">ATP-binding</keyword>
<keyword id="KW-0963">Cytoplasm</keyword>
<keyword id="KW-0227">DNA damage</keyword>
<keyword id="KW-0228">DNA excision</keyword>
<keyword id="KW-0234">DNA repair</keyword>
<keyword id="KW-0267">Excision nuclease</keyword>
<keyword id="KW-0347">Helicase</keyword>
<keyword id="KW-0378">Hydrolase</keyword>
<keyword id="KW-0547">Nucleotide-binding</keyword>
<keyword id="KW-0742">SOS response</keyword>
<dbReference type="EMBL" id="AM295007">
    <property type="protein sequence ID" value="CAM30118.1"/>
    <property type="molecule type" value="Genomic_DNA"/>
</dbReference>
<dbReference type="RefSeq" id="WP_011888826.1">
    <property type="nucleotide sequence ID" value="NC_009332.1"/>
</dbReference>
<dbReference type="SMR" id="A2RE43"/>
<dbReference type="KEGG" id="spf:SpyM50790"/>
<dbReference type="HOGENOM" id="CLU_009621_2_1_9"/>
<dbReference type="GO" id="GO:0005737">
    <property type="term" value="C:cytoplasm"/>
    <property type="evidence" value="ECO:0007669"/>
    <property type="project" value="UniProtKB-SubCell"/>
</dbReference>
<dbReference type="GO" id="GO:0009380">
    <property type="term" value="C:excinuclease repair complex"/>
    <property type="evidence" value="ECO:0007669"/>
    <property type="project" value="InterPro"/>
</dbReference>
<dbReference type="GO" id="GO:0005524">
    <property type="term" value="F:ATP binding"/>
    <property type="evidence" value="ECO:0007669"/>
    <property type="project" value="UniProtKB-UniRule"/>
</dbReference>
<dbReference type="GO" id="GO:0016887">
    <property type="term" value="F:ATP hydrolysis activity"/>
    <property type="evidence" value="ECO:0007669"/>
    <property type="project" value="InterPro"/>
</dbReference>
<dbReference type="GO" id="GO:0003677">
    <property type="term" value="F:DNA binding"/>
    <property type="evidence" value="ECO:0007669"/>
    <property type="project" value="UniProtKB-UniRule"/>
</dbReference>
<dbReference type="GO" id="GO:0009381">
    <property type="term" value="F:excinuclease ABC activity"/>
    <property type="evidence" value="ECO:0007669"/>
    <property type="project" value="UniProtKB-UniRule"/>
</dbReference>
<dbReference type="GO" id="GO:0004386">
    <property type="term" value="F:helicase activity"/>
    <property type="evidence" value="ECO:0007669"/>
    <property type="project" value="UniProtKB-KW"/>
</dbReference>
<dbReference type="GO" id="GO:0006289">
    <property type="term" value="P:nucleotide-excision repair"/>
    <property type="evidence" value="ECO:0007669"/>
    <property type="project" value="UniProtKB-UniRule"/>
</dbReference>
<dbReference type="GO" id="GO:0009432">
    <property type="term" value="P:SOS response"/>
    <property type="evidence" value="ECO:0007669"/>
    <property type="project" value="UniProtKB-UniRule"/>
</dbReference>
<dbReference type="CDD" id="cd17916">
    <property type="entry name" value="DEXHc_UvrB"/>
    <property type="match status" value="1"/>
</dbReference>
<dbReference type="CDD" id="cd18790">
    <property type="entry name" value="SF2_C_UvrB"/>
    <property type="match status" value="1"/>
</dbReference>
<dbReference type="Gene3D" id="3.40.50.300">
    <property type="entry name" value="P-loop containing nucleotide triphosphate hydrolases"/>
    <property type="match status" value="3"/>
</dbReference>
<dbReference type="Gene3D" id="4.10.860.10">
    <property type="entry name" value="UVR domain"/>
    <property type="match status" value="1"/>
</dbReference>
<dbReference type="HAMAP" id="MF_00204">
    <property type="entry name" value="UvrB"/>
    <property type="match status" value="1"/>
</dbReference>
<dbReference type="InterPro" id="IPR006935">
    <property type="entry name" value="Helicase/UvrB_N"/>
</dbReference>
<dbReference type="InterPro" id="IPR014001">
    <property type="entry name" value="Helicase_ATP-bd"/>
</dbReference>
<dbReference type="InterPro" id="IPR001650">
    <property type="entry name" value="Helicase_C-like"/>
</dbReference>
<dbReference type="InterPro" id="IPR027417">
    <property type="entry name" value="P-loop_NTPase"/>
</dbReference>
<dbReference type="InterPro" id="IPR001943">
    <property type="entry name" value="UVR_dom"/>
</dbReference>
<dbReference type="InterPro" id="IPR036876">
    <property type="entry name" value="UVR_dom_sf"/>
</dbReference>
<dbReference type="InterPro" id="IPR004807">
    <property type="entry name" value="UvrB"/>
</dbReference>
<dbReference type="InterPro" id="IPR041471">
    <property type="entry name" value="UvrB_inter"/>
</dbReference>
<dbReference type="InterPro" id="IPR024759">
    <property type="entry name" value="UvrB_YAD/RRR_dom"/>
</dbReference>
<dbReference type="NCBIfam" id="NF003673">
    <property type="entry name" value="PRK05298.1"/>
    <property type="match status" value="1"/>
</dbReference>
<dbReference type="NCBIfam" id="TIGR00631">
    <property type="entry name" value="uvrb"/>
    <property type="match status" value="1"/>
</dbReference>
<dbReference type="PANTHER" id="PTHR24029">
    <property type="entry name" value="UVRABC SYSTEM PROTEIN B"/>
    <property type="match status" value="1"/>
</dbReference>
<dbReference type="PANTHER" id="PTHR24029:SF0">
    <property type="entry name" value="UVRABC SYSTEM PROTEIN B"/>
    <property type="match status" value="1"/>
</dbReference>
<dbReference type="Pfam" id="PF00271">
    <property type="entry name" value="Helicase_C"/>
    <property type="match status" value="1"/>
</dbReference>
<dbReference type="Pfam" id="PF04851">
    <property type="entry name" value="ResIII"/>
    <property type="match status" value="1"/>
</dbReference>
<dbReference type="Pfam" id="PF02151">
    <property type="entry name" value="UVR"/>
    <property type="match status" value="1"/>
</dbReference>
<dbReference type="Pfam" id="PF12344">
    <property type="entry name" value="UvrB"/>
    <property type="match status" value="1"/>
</dbReference>
<dbReference type="Pfam" id="PF17757">
    <property type="entry name" value="UvrB_inter"/>
    <property type="match status" value="1"/>
</dbReference>
<dbReference type="SMART" id="SM00487">
    <property type="entry name" value="DEXDc"/>
    <property type="match status" value="1"/>
</dbReference>
<dbReference type="SMART" id="SM00490">
    <property type="entry name" value="HELICc"/>
    <property type="match status" value="1"/>
</dbReference>
<dbReference type="SUPFAM" id="SSF46600">
    <property type="entry name" value="C-terminal UvrC-binding domain of UvrB"/>
    <property type="match status" value="1"/>
</dbReference>
<dbReference type="SUPFAM" id="SSF52540">
    <property type="entry name" value="P-loop containing nucleoside triphosphate hydrolases"/>
    <property type="match status" value="2"/>
</dbReference>
<dbReference type="PROSITE" id="PS51192">
    <property type="entry name" value="HELICASE_ATP_BIND_1"/>
    <property type="match status" value="1"/>
</dbReference>
<dbReference type="PROSITE" id="PS51194">
    <property type="entry name" value="HELICASE_CTER"/>
    <property type="match status" value="1"/>
</dbReference>
<dbReference type="PROSITE" id="PS50151">
    <property type="entry name" value="UVR"/>
    <property type="match status" value="1"/>
</dbReference>
<protein>
    <recommendedName>
        <fullName evidence="1">UvrABC system protein B</fullName>
        <shortName evidence="1">Protein UvrB</shortName>
    </recommendedName>
    <alternativeName>
        <fullName evidence="1">Excinuclease ABC subunit B</fullName>
    </alternativeName>
</protein>
<gene>
    <name evidence="1" type="primary">uvrB</name>
    <name type="ordered locus">SpyM50790</name>
</gene>
<organism>
    <name type="scientific">Streptococcus pyogenes serotype M5 (strain Manfredo)</name>
    <dbReference type="NCBI Taxonomy" id="160491"/>
    <lineage>
        <taxon>Bacteria</taxon>
        <taxon>Bacillati</taxon>
        <taxon>Bacillota</taxon>
        <taxon>Bacilli</taxon>
        <taxon>Lactobacillales</taxon>
        <taxon>Streptococcaceae</taxon>
        <taxon>Streptococcus</taxon>
    </lineage>
</organism>
<reference key="1">
    <citation type="journal article" date="2007" name="J. Bacteriol.">
        <title>Complete genome of acute rheumatic fever-associated serotype M5 Streptococcus pyogenes strain Manfredo.</title>
        <authorList>
            <person name="Holden M.T.G."/>
            <person name="Scott A."/>
            <person name="Cherevach I."/>
            <person name="Chillingworth T."/>
            <person name="Churcher C."/>
            <person name="Cronin A."/>
            <person name="Dowd L."/>
            <person name="Feltwell T."/>
            <person name="Hamlin N."/>
            <person name="Holroyd S."/>
            <person name="Jagels K."/>
            <person name="Moule S."/>
            <person name="Mungall K."/>
            <person name="Quail M.A."/>
            <person name="Price C."/>
            <person name="Rabbinowitsch E."/>
            <person name="Sharp S."/>
            <person name="Skelton J."/>
            <person name="Whitehead S."/>
            <person name="Barrell B.G."/>
            <person name="Kehoe M."/>
            <person name="Parkhill J."/>
        </authorList>
    </citation>
    <scope>NUCLEOTIDE SEQUENCE [LARGE SCALE GENOMIC DNA]</scope>
    <source>
        <strain>Manfredo</strain>
    </source>
</reference>
<proteinExistence type="inferred from homology"/>
<feature type="chain" id="PRO_1000077930" description="UvrABC system protein B">
    <location>
        <begin position="1"/>
        <end position="663"/>
    </location>
</feature>
<feature type="domain" description="Helicase ATP-binding" evidence="1">
    <location>
        <begin position="31"/>
        <end position="271"/>
    </location>
</feature>
<feature type="domain" description="Helicase C-terminal" evidence="1">
    <location>
        <begin position="435"/>
        <end position="601"/>
    </location>
</feature>
<feature type="domain" description="UVR" evidence="1">
    <location>
        <begin position="627"/>
        <end position="662"/>
    </location>
</feature>
<feature type="region of interest" description="Disordered" evidence="2">
    <location>
        <begin position="1"/>
        <end position="23"/>
    </location>
</feature>
<feature type="short sequence motif" description="Beta-hairpin">
    <location>
        <begin position="97"/>
        <end position="120"/>
    </location>
</feature>
<feature type="compositionally biased region" description="Basic and acidic residues" evidence="2">
    <location>
        <begin position="1"/>
        <end position="10"/>
    </location>
</feature>
<feature type="binding site" evidence="1">
    <location>
        <begin position="44"/>
        <end position="51"/>
    </location>
    <ligand>
        <name>ATP</name>
        <dbReference type="ChEBI" id="CHEBI:30616"/>
    </ligand>
</feature>
<accession>A2RE43</accession>
<name>UVRB_STRPG</name>
<comment type="function">
    <text evidence="1">The UvrABC repair system catalyzes the recognition and processing of DNA lesions. A damage recognition complex composed of 2 UvrA and 2 UvrB subunits scans DNA for abnormalities. Upon binding of the UvrA(2)B(2) complex to a putative damaged site, the DNA wraps around one UvrB monomer. DNA wrap is dependent on ATP binding by UvrB and probably causes local melting of the DNA helix, facilitating insertion of UvrB beta-hairpin between the DNA strands. Then UvrB probes one DNA strand for the presence of a lesion. If a lesion is found the UvrA subunits dissociate and the UvrB-DNA preincision complex is formed. This complex is subsequently bound by UvrC and the second UvrB is released. If no lesion is found, the DNA wraps around the other UvrB subunit that will check the other stand for damage.</text>
</comment>
<comment type="subunit">
    <text evidence="1">Forms a heterotetramer with UvrA during the search for lesions. Interacts with UvrC in an incision complex.</text>
</comment>
<comment type="subcellular location">
    <subcellularLocation>
        <location evidence="1">Cytoplasm</location>
    </subcellularLocation>
</comment>
<comment type="domain">
    <text evidence="1">The beta-hairpin motif is involved in DNA binding.</text>
</comment>
<comment type="similarity">
    <text evidence="1">Belongs to the UvrB family.</text>
</comment>